<sequence length="153" mass="16993">MKKNIALFAGSFDPFTRGHADIVERSLAIFDEVIIAIGINEQKRTLFSAERRQEQIARYYASRPAIGVITYSGLTVDLVRQTGATALVRGIRSGSDFEYERTLADLNRHLSGVDTVLLCTDTRLSFISSSAVRELISFGRDVSDFLPEGFVLD</sequence>
<feature type="chain" id="PRO_0000156252" description="Phosphopantetheine adenylyltransferase">
    <location>
        <begin position="1"/>
        <end position="153"/>
    </location>
</feature>
<feature type="binding site" evidence="1">
    <location>
        <begin position="11"/>
        <end position="12"/>
    </location>
    <ligand>
        <name>ATP</name>
        <dbReference type="ChEBI" id="CHEBI:30616"/>
    </ligand>
</feature>
<feature type="binding site" evidence="1">
    <location>
        <position position="11"/>
    </location>
    <ligand>
        <name>substrate</name>
    </ligand>
</feature>
<feature type="binding site" evidence="1">
    <location>
        <position position="19"/>
    </location>
    <ligand>
        <name>ATP</name>
        <dbReference type="ChEBI" id="CHEBI:30616"/>
    </ligand>
</feature>
<feature type="binding site" evidence="1">
    <location>
        <position position="43"/>
    </location>
    <ligand>
        <name>substrate</name>
    </ligand>
</feature>
<feature type="binding site" evidence="1">
    <location>
        <position position="75"/>
    </location>
    <ligand>
        <name>substrate</name>
    </ligand>
</feature>
<feature type="binding site" evidence="1">
    <location>
        <position position="89"/>
    </location>
    <ligand>
        <name>substrate</name>
    </ligand>
</feature>
<feature type="binding site" evidence="1">
    <location>
        <begin position="90"/>
        <end position="92"/>
    </location>
    <ligand>
        <name>ATP</name>
        <dbReference type="ChEBI" id="CHEBI:30616"/>
    </ligand>
</feature>
<feature type="binding site" evidence="1">
    <location>
        <position position="100"/>
    </location>
    <ligand>
        <name>ATP</name>
        <dbReference type="ChEBI" id="CHEBI:30616"/>
    </ligand>
</feature>
<feature type="binding site" evidence="1">
    <location>
        <begin position="124"/>
        <end position="130"/>
    </location>
    <ligand>
        <name>ATP</name>
        <dbReference type="ChEBI" id="CHEBI:30616"/>
    </ligand>
</feature>
<feature type="site" description="Transition state stabilizer" evidence="1">
    <location>
        <position position="19"/>
    </location>
</feature>
<accession>Q7MX47</accession>
<protein>
    <recommendedName>
        <fullName evidence="1">Phosphopantetheine adenylyltransferase</fullName>
        <ecNumber evidence="1">2.7.7.3</ecNumber>
    </recommendedName>
    <alternativeName>
        <fullName evidence="1">Dephospho-CoA pyrophosphorylase</fullName>
    </alternativeName>
    <alternativeName>
        <fullName evidence="1">Pantetheine-phosphate adenylyltransferase</fullName>
        <shortName evidence="1">PPAT</shortName>
    </alternativeName>
</protein>
<proteinExistence type="inferred from homology"/>
<keyword id="KW-0067">ATP-binding</keyword>
<keyword id="KW-0173">Coenzyme A biosynthesis</keyword>
<keyword id="KW-0963">Cytoplasm</keyword>
<keyword id="KW-0460">Magnesium</keyword>
<keyword id="KW-0547">Nucleotide-binding</keyword>
<keyword id="KW-0548">Nucleotidyltransferase</keyword>
<keyword id="KW-1185">Reference proteome</keyword>
<keyword id="KW-0808">Transferase</keyword>
<comment type="function">
    <text evidence="1">Reversibly transfers an adenylyl group from ATP to 4'-phosphopantetheine, yielding dephospho-CoA (dPCoA) and pyrophosphate.</text>
</comment>
<comment type="catalytic activity">
    <reaction evidence="1">
        <text>(R)-4'-phosphopantetheine + ATP + H(+) = 3'-dephospho-CoA + diphosphate</text>
        <dbReference type="Rhea" id="RHEA:19801"/>
        <dbReference type="ChEBI" id="CHEBI:15378"/>
        <dbReference type="ChEBI" id="CHEBI:30616"/>
        <dbReference type="ChEBI" id="CHEBI:33019"/>
        <dbReference type="ChEBI" id="CHEBI:57328"/>
        <dbReference type="ChEBI" id="CHEBI:61723"/>
        <dbReference type="EC" id="2.7.7.3"/>
    </reaction>
</comment>
<comment type="cofactor">
    <cofactor evidence="1">
        <name>Mg(2+)</name>
        <dbReference type="ChEBI" id="CHEBI:18420"/>
    </cofactor>
</comment>
<comment type="pathway">
    <text evidence="1">Cofactor biosynthesis; coenzyme A biosynthesis; CoA from (R)-pantothenate: step 4/5.</text>
</comment>
<comment type="subunit">
    <text evidence="1">Homohexamer.</text>
</comment>
<comment type="subcellular location">
    <subcellularLocation>
        <location evidence="1">Cytoplasm</location>
    </subcellularLocation>
</comment>
<comment type="similarity">
    <text evidence="1">Belongs to the bacterial CoaD family.</text>
</comment>
<dbReference type="EC" id="2.7.7.3" evidence="1"/>
<dbReference type="EMBL" id="AE015924">
    <property type="protein sequence ID" value="AAQ65578.1"/>
    <property type="molecule type" value="Genomic_DNA"/>
</dbReference>
<dbReference type="RefSeq" id="WP_005873821.1">
    <property type="nucleotide sequence ID" value="NC_002950.2"/>
</dbReference>
<dbReference type="SMR" id="Q7MX47"/>
<dbReference type="STRING" id="242619.PG_0369"/>
<dbReference type="EnsemblBacteria" id="AAQ65578">
    <property type="protein sequence ID" value="AAQ65578"/>
    <property type="gene ID" value="PG_0369"/>
</dbReference>
<dbReference type="GeneID" id="29256767"/>
<dbReference type="GeneID" id="57239832"/>
<dbReference type="KEGG" id="pgi:PG_0369"/>
<dbReference type="eggNOG" id="COG0669">
    <property type="taxonomic scope" value="Bacteria"/>
</dbReference>
<dbReference type="HOGENOM" id="CLU_100149_1_1_10"/>
<dbReference type="UniPathway" id="UPA00241">
    <property type="reaction ID" value="UER00355"/>
</dbReference>
<dbReference type="Proteomes" id="UP000000588">
    <property type="component" value="Chromosome"/>
</dbReference>
<dbReference type="GO" id="GO:0005737">
    <property type="term" value="C:cytoplasm"/>
    <property type="evidence" value="ECO:0007669"/>
    <property type="project" value="UniProtKB-SubCell"/>
</dbReference>
<dbReference type="GO" id="GO:0005524">
    <property type="term" value="F:ATP binding"/>
    <property type="evidence" value="ECO:0007669"/>
    <property type="project" value="UniProtKB-KW"/>
</dbReference>
<dbReference type="GO" id="GO:0004595">
    <property type="term" value="F:pantetheine-phosphate adenylyltransferase activity"/>
    <property type="evidence" value="ECO:0007669"/>
    <property type="project" value="UniProtKB-UniRule"/>
</dbReference>
<dbReference type="GO" id="GO:0015937">
    <property type="term" value="P:coenzyme A biosynthetic process"/>
    <property type="evidence" value="ECO:0007669"/>
    <property type="project" value="UniProtKB-UniRule"/>
</dbReference>
<dbReference type="Gene3D" id="3.40.50.620">
    <property type="entry name" value="HUPs"/>
    <property type="match status" value="1"/>
</dbReference>
<dbReference type="HAMAP" id="MF_00151">
    <property type="entry name" value="PPAT_bact"/>
    <property type="match status" value="1"/>
</dbReference>
<dbReference type="InterPro" id="IPR004821">
    <property type="entry name" value="Cyt_trans-like"/>
</dbReference>
<dbReference type="InterPro" id="IPR001980">
    <property type="entry name" value="PPAT"/>
</dbReference>
<dbReference type="InterPro" id="IPR014729">
    <property type="entry name" value="Rossmann-like_a/b/a_fold"/>
</dbReference>
<dbReference type="NCBIfam" id="TIGR01510">
    <property type="entry name" value="coaD_prev_kdtB"/>
    <property type="match status" value="1"/>
</dbReference>
<dbReference type="NCBIfam" id="TIGR00125">
    <property type="entry name" value="cyt_tran_rel"/>
    <property type="match status" value="1"/>
</dbReference>
<dbReference type="PANTHER" id="PTHR21342">
    <property type="entry name" value="PHOSPHOPANTETHEINE ADENYLYLTRANSFERASE"/>
    <property type="match status" value="1"/>
</dbReference>
<dbReference type="PANTHER" id="PTHR21342:SF1">
    <property type="entry name" value="PHOSPHOPANTETHEINE ADENYLYLTRANSFERASE"/>
    <property type="match status" value="1"/>
</dbReference>
<dbReference type="Pfam" id="PF01467">
    <property type="entry name" value="CTP_transf_like"/>
    <property type="match status" value="1"/>
</dbReference>
<dbReference type="PRINTS" id="PR01020">
    <property type="entry name" value="LPSBIOSNTHSS"/>
</dbReference>
<dbReference type="SUPFAM" id="SSF52374">
    <property type="entry name" value="Nucleotidylyl transferase"/>
    <property type="match status" value="1"/>
</dbReference>
<name>COAD_PORGI</name>
<evidence type="ECO:0000255" key="1">
    <source>
        <dbReference type="HAMAP-Rule" id="MF_00151"/>
    </source>
</evidence>
<organism>
    <name type="scientific">Porphyromonas gingivalis (strain ATCC BAA-308 / W83)</name>
    <dbReference type="NCBI Taxonomy" id="242619"/>
    <lineage>
        <taxon>Bacteria</taxon>
        <taxon>Pseudomonadati</taxon>
        <taxon>Bacteroidota</taxon>
        <taxon>Bacteroidia</taxon>
        <taxon>Bacteroidales</taxon>
        <taxon>Porphyromonadaceae</taxon>
        <taxon>Porphyromonas</taxon>
    </lineage>
</organism>
<reference key="1">
    <citation type="journal article" date="2003" name="J. Bacteriol.">
        <title>Complete genome sequence of the oral pathogenic bacterium Porphyromonas gingivalis strain W83.</title>
        <authorList>
            <person name="Nelson K.E."/>
            <person name="Fleischmann R.D."/>
            <person name="DeBoy R.T."/>
            <person name="Paulsen I.T."/>
            <person name="Fouts D.E."/>
            <person name="Eisen J.A."/>
            <person name="Daugherty S.C."/>
            <person name="Dodson R.J."/>
            <person name="Durkin A.S."/>
            <person name="Gwinn M.L."/>
            <person name="Haft D.H."/>
            <person name="Kolonay J.F."/>
            <person name="Nelson W.C."/>
            <person name="Mason T.M."/>
            <person name="Tallon L."/>
            <person name="Gray J."/>
            <person name="Granger D."/>
            <person name="Tettelin H."/>
            <person name="Dong H."/>
            <person name="Galvin J.L."/>
            <person name="Duncan M.J."/>
            <person name="Dewhirst F.E."/>
            <person name="Fraser C.M."/>
        </authorList>
    </citation>
    <scope>NUCLEOTIDE SEQUENCE [LARGE SCALE GENOMIC DNA]</scope>
    <source>
        <strain>ATCC BAA-308 / W83</strain>
    </source>
</reference>
<gene>
    <name evidence="1" type="primary">coaD</name>
    <name type="ordered locus">PG_0369</name>
</gene>